<name>YL152_YEAST</name>
<keyword id="KW-0472">Membrane</keyword>
<keyword id="KW-1185">Reference proteome</keyword>
<keyword id="KW-0812">Transmembrane</keyword>
<keyword id="KW-1133">Transmembrane helix</keyword>
<keyword id="KW-0813">Transport</keyword>
<protein>
    <recommendedName>
        <fullName>Uncharacterized transporter YLR152C</fullName>
    </recommendedName>
</protein>
<reference key="1">
    <citation type="journal article" date="1997" name="Nature">
        <title>The nucleotide sequence of Saccharomyces cerevisiae chromosome XII.</title>
        <authorList>
            <person name="Johnston M."/>
            <person name="Hillier L.W."/>
            <person name="Riles L."/>
            <person name="Albermann K."/>
            <person name="Andre B."/>
            <person name="Ansorge W."/>
            <person name="Benes V."/>
            <person name="Brueckner M."/>
            <person name="Delius H."/>
            <person name="Dubois E."/>
            <person name="Duesterhoeft A."/>
            <person name="Entian K.-D."/>
            <person name="Floeth M."/>
            <person name="Goffeau A."/>
            <person name="Hebling U."/>
            <person name="Heumann K."/>
            <person name="Heuss-Neitzel D."/>
            <person name="Hilbert H."/>
            <person name="Hilger F."/>
            <person name="Kleine K."/>
            <person name="Koetter P."/>
            <person name="Louis E.J."/>
            <person name="Messenguy F."/>
            <person name="Mewes H.-W."/>
            <person name="Miosga T."/>
            <person name="Moestl D."/>
            <person name="Mueller-Auer S."/>
            <person name="Nentwich U."/>
            <person name="Obermaier B."/>
            <person name="Piravandi E."/>
            <person name="Pohl T.M."/>
            <person name="Portetelle D."/>
            <person name="Purnelle B."/>
            <person name="Rechmann S."/>
            <person name="Rieger M."/>
            <person name="Rinke M."/>
            <person name="Rose M."/>
            <person name="Scharfe M."/>
            <person name="Scherens B."/>
            <person name="Scholler P."/>
            <person name="Schwager C."/>
            <person name="Schwarz S."/>
            <person name="Underwood A.P."/>
            <person name="Urrestarazu L.A."/>
            <person name="Vandenbol M."/>
            <person name="Verhasselt P."/>
            <person name="Vierendeels F."/>
            <person name="Voet M."/>
            <person name="Volckaert G."/>
            <person name="Voss H."/>
            <person name="Wambutt R."/>
            <person name="Wedler E."/>
            <person name="Wedler H."/>
            <person name="Zimmermann F.K."/>
            <person name="Zollner A."/>
            <person name="Hani J."/>
            <person name="Hoheisel J.D."/>
        </authorList>
    </citation>
    <scope>NUCLEOTIDE SEQUENCE [LARGE SCALE GENOMIC DNA]</scope>
    <source>
        <strain>ATCC 204508 / S288c</strain>
    </source>
</reference>
<reference key="2">
    <citation type="journal article" date="2014" name="G3 (Bethesda)">
        <title>The reference genome sequence of Saccharomyces cerevisiae: Then and now.</title>
        <authorList>
            <person name="Engel S.R."/>
            <person name="Dietrich F.S."/>
            <person name="Fisk D.G."/>
            <person name="Binkley G."/>
            <person name="Balakrishnan R."/>
            <person name="Costanzo M.C."/>
            <person name="Dwight S.S."/>
            <person name="Hitz B.C."/>
            <person name="Karra K."/>
            <person name="Nash R.S."/>
            <person name="Weng S."/>
            <person name="Wong E.D."/>
            <person name="Lloyd P."/>
            <person name="Skrzypek M.S."/>
            <person name="Miyasato S.R."/>
            <person name="Simison M."/>
            <person name="Cherry J.M."/>
        </authorList>
    </citation>
    <scope>GENOME REANNOTATION</scope>
    <source>
        <strain>ATCC 204508 / S288c</strain>
    </source>
</reference>
<reference key="3">
    <citation type="journal article" date="2006" name="Proc. Natl. Acad. Sci. U.S.A.">
        <title>A global topology map of the Saccharomyces cerevisiae membrane proteome.</title>
        <authorList>
            <person name="Kim H."/>
            <person name="Melen K."/>
            <person name="Oesterberg M."/>
            <person name="von Heijne G."/>
        </authorList>
    </citation>
    <scope>TOPOLOGY [LARGE SCALE ANALYSIS]</scope>
    <source>
        <strain>ATCC 208353 / W303-1A</strain>
    </source>
</reference>
<reference key="4">
    <citation type="journal article" date="2008" name="Mol. Cell. Proteomics">
        <title>A multidimensional chromatography technology for in-depth phosphoproteome analysis.</title>
        <authorList>
            <person name="Albuquerque C.P."/>
            <person name="Smolka M.B."/>
            <person name="Payne S.H."/>
            <person name="Bafna V."/>
            <person name="Eng J."/>
            <person name="Zhou H."/>
        </authorList>
    </citation>
    <scope>IDENTIFICATION BY MASS SPECTROMETRY [LARGE SCALE ANALYSIS]</scope>
</reference>
<accession>P54072</accession>
<accession>D6VYE7</accession>
<gene>
    <name type="ordered locus">YLR152C</name>
    <name type="ORF">L9634.9</name>
</gene>
<dbReference type="EMBL" id="Z73324">
    <property type="protein sequence ID" value="CAA97724.1"/>
    <property type="molecule type" value="Genomic_DNA"/>
</dbReference>
<dbReference type="EMBL" id="U53879">
    <property type="protein sequence ID" value="AAB82386.1"/>
    <property type="molecule type" value="Genomic_DNA"/>
</dbReference>
<dbReference type="EMBL" id="BK006945">
    <property type="protein sequence ID" value="DAA09463.1"/>
    <property type="molecule type" value="Genomic_DNA"/>
</dbReference>
<dbReference type="PIR" id="S65001">
    <property type="entry name" value="S65001"/>
</dbReference>
<dbReference type="RefSeq" id="NP_013253.1">
    <property type="nucleotide sequence ID" value="NM_001182039.1"/>
</dbReference>
<dbReference type="BioGRID" id="31421">
    <property type="interactions" value="84"/>
</dbReference>
<dbReference type="DIP" id="DIP-6543N"/>
<dbReference type="FunCoup" id="P54072">
    <property type="interactions" value="105"/>
</dbReference>
<dbReference type="IntAct" id="P54072">
    <property type="interactions" value="2"/>
</dbReference>
<dbReference type="MINT" id="P54072"/>
<dbReference type="STRING" id="4932.YLR152C"/>
<dbReference type="TCDB" id="2.A.69.2.6">
    <property type="family name" value="the auxin efflux carrier (aec) family"/>
</dbReference>
<dbReference type="iPTMnet" id="P54072"/>
<dbReference type="PaxDb" id="4932-YLR152C"/>
<dbReference type="PeptideAtlas" id="P54072"/>
<dbReference type="EnsemblFungi" id="YLR152C_mRNA">
    <property type="protein sequence ID" value="YLR152C"/>
    <property type="gene ID" value="YLR152C"/>
</dbReference>
<dbReference type="GeneID" id="850845"/>
<dbReference type="KEGG" id="sce:YLR152C"/>
<dbReference type="AGR" id="SGD:S000004142"/>
<dbReference type="SGD" id="S000004142">
    <property type="gene designation" value="YLR152C"/>
</dbReference>
<dbReference type="VEuPathDB" id="FungiDB:YLR152C"/>
<dbReference type="eggNOG" id="ENOG502QU6H">
    <property type="taxonomic scope" value="Eukaryota"/>
</dbReference>
<dbReference type="GeneTree" id="ENSGT00940000176363"/>
<dbReference type="HOGENOM" id="CLU_021924_0_1_1"/>
<dbReference type="InParanoid" id="P54072"/>
<dbReference type="OMA" id="GVAYCCI"/>
<dbReference type="OrthoDB" id="435607at2759"/>
<dbReference type="BioCyc" id="YEAST:G3O-32287-MONOMER"/>
<dbReference type="BioGRID-ORCS" id="850845">
    <property type="hits" value="1 hit in 10 CRISPR screens"/>
</dbReference>
<dbReference type="PRO" id="PR:P54072"/>
<dbReference type="Proteomes" id="UP000002311">
    <property type="component" value="Chromosome XII"/>
</dbReference>
<dbReference type="RNAct" id="P54072">
    <property type="molecule type" value="protein"/>
</dbReference>
<dbReference type="GO" id="GO:0016020">
    <property type="term" value="C:membrane"/>
    <property type="evidence" value="ECO:0007669"/>
    <property type="project" value="UniProtKB-SubCell"/>
</dbReference>
<dbReference type="GO" id="GO:0055085">
    <property type="term" value="P:transmembrane transport"/>
    <property type="evidence" value="ECO:0007669"/>
    <property type="project" value="InterPro"/>
</dbReference>
<dbReference type="InterPro" id="IPR040254">
    <property type="entry name" value="Ecm3-like"/>
</dbReference>
<dbReference type="InterPro" id="IPR004776">
    <property type="entry name" value="Mem_transp_PIN-like"/>
</dbReference>
<dbReference type="PANTHER" id="PTHR31274:SF1">
    <property type="entry name" value="AGL149CP"/>
    <property type="match status" value="1"/>
</dbReference>
<dbReference type="PANTHER" id="PTHR31274">
    <property type="entry name" value="PROTEIN ECM3"/>
    <property type="match status" value="1"/>
</dbReference>
<dbReference type="Pfam" id="PF03547">
    <property type="entry name" value="Mem_trans"/>
    <property type="match status" value="1"/>
</dbReference>
<feature type="chain" id="PRO_0000123806" description="Uncharacterized transporter YLR152C">
    <location>
        <begin position="1"/>
        <end position="576"/>
    </location>
</feature>
<feature type="topological domain" description="Cytoplasmic" evidence="1">
    <location>
        <begin position="1"/>
        <end position="8"/>
    </location>
</feature>
<feature type="transmembrane region" description="Helical" evidence="1">
    <location>
        <begin position="9"/>
        <end position="29"/>
    </location>
</feature>
<feature type="topological domain" description="Extracellular" evidence="1">
    <location>
        <begin position="30"/>
        <end position="45"/>
    </location>
</feature>
<feature type="transmembrane region" description="Helical" evidence="1">
    <location>
        <begin position="46"/>
        <end position="66"/>
    </location>
</feature>
<feature type="topological domain" description="Cytoplasmic" evidence="1">
    <location>
        <begin position="67"/>
        <end position="71"/>
    </location>
</feature>
<feature type="transmembrane region" description="Helical" evidence="1">
    <location>
        <begin position="72"/>
        <end position="92"/>
    </location>
</feature>
<feature type="topological domain" description="Extracellular" evidence="1">
    <location>
        <begin position="93"/>
        <end position="103"/>
    </location>
</feature>
<feature type="transmembrane region" description="Helical" evidence="1">
    <location>
        <begin position="104"/>
        <end position="124"/>
    </location>
</feature>
<feature type="topological domain" description="Cytoplasmic" evidence="1">
    <location>
        <begin position="125"/>
        <end position="141"/>
    </location>
</feature>
<feature type="transmembrane region" description="Helical" evidence="1">
    <location>
        <begin position="142"/>
        <end position="162"/>
    </location>
</feature>
<feature type="topological domain" description="Extracellular" evidence="1">
    <location>
        <begin position="163"/>
        <end position="400"/>
    </location>
</feature>
<feature type="transmembrane region" description="Helical" evidence="1">
    <location>
        <begin position="401"/>
        <end position="421"/>
    </location>
</feature>
<feature type="topological domain" description="Cytoplasmic" evidence="1">
    <location>
        <begin position="422"/>
        <end position="437"/>
    </location>
</feature>
<feature type="transmembrane region" description="Helical" evidence="1">
    <location>
        <begin position="438"/>
        <end position="458"/>
    </location>
</feature>
<feature type="topological domain" description="Extracellular" evidence="1">
    <location>
        <begin position="459"/>
        <end position="476"/>
    </location>
</feature>
<feature type="transmembrane region" description="Helical" evidence="1">
    <location>
        <begin position="477"/>
        <end position="497"/>
    </location>
</feature>
<feature type="topological domain" description="Cytoplasmic" evidence="1">
    <location>
        <begin position="498"/>
        <end position="512"/>
    </location>
</feature>
<feature type="transmembrane region" description="Helical" evidence="1">
    <location>
        <begin position="513"/>
        <end position="533"/>
    </location>
</feature>
<feature type="topological domain" description="Extracellular" evidence="1">
    <location>
        <begin position="534"/>
        <end position="545"/>
    </location>
</feature>
<feature type="transmembrane region" description="Helical" evidence="1">
    <location>
        <begin position="546"/>
        <end position="566"/>
    </location>
</feature>
<feature type="topological domain" description="Cytoplasmic" evidence="1">
    <location>
        <begin position="567"/>
        <end position="576"/>
    </location>
</feature>
<sequence>MSLSLGAAIYIALKPIFKIYTIMLVGYLVAKFDIVSMENAKGISNMVVNAILPCLTFNKIVSNISWRDIKEIGVIILSAFILFVLGATGALFTTFATTVPKKFFWGLIFAGFFPNISDLPIAYIQSMGNGSIFTAEEADKGVAYSCIFLFIQSFLMMNFGMWRVVGLDFRDTKEPDSENITPSVSPAIDDRKLTEITKLPNITRPTNAYQSEDARSNSDLSCNSITTNEMTPQAFYEGFTGYIKPYKESNGASHKFESDLPHAEIYRVSSTYSSPGALEFSRIDGSSLSYSRISKNSDGRSYRRKRKADMNELISKYSAAEKIRQGELDLSRPLSLTEEVGSRNASIGNVHTGYTDESSIEEENCTNMATDGRGSLSFFIERHNLKWLQYFIINCLRPASLGAILGIICALIPWVKACFVTTYVHVHKAPDGEPVLNFLMDFTEYIGNACVPLGLLLLGGTLARLEIKSLPPGFIKSALLMTCFRLIVIPIIGVLWVNKLYSIDWLDTGIGKFDMILTWSMPSATAQVYFTAFYTPACGDHIQMNCLSVLFVMQYAILFITVAFVVTYTLKVDLKV</sequence>
<proteinExistence type="evidence at protein level"/>
<comment type="subcellular location">
    <subcellularLocation>
        <location>Membrane</location>
        <topology>Multi-pass membrane protein</topology>
    </subcellularLocation>
</comment>
<comment type="similarity">
    <text evidence="2">Belongs to the auxin efflux carrier (TC 2.A.69) family.</text>
</comment>
<evidence type="ECO:0000255" key="1"/>
<evidence type="ECO:0000305" key="2"/>
<organism>
    <name type="scientific">Saccharomyces cerevisiae (strain ATCC 204508 / S288c)</name>
    <name type="common">Baker's yeast</name>
    <dbReference type="NCBI Taxonomy" id="559292"/>
    <lineage>
        <taxon>Eukaryota</taxon>
        <taxon>Fungi</taxon>
        <taxon>Dikarya</taxon>
        <taxon>Ascomycota</taxon>
        <taxon>Saccharomycotina</taxon>
        <taxon>Saccharomycetes</taxon>
        <taxon>Saccharomycetales</taxon>
        <taxon>Saccharomycetaceae</taxon>
        <taxon>Saccharomyces</taxon>
    </lineage>
</organism>